<name>ATPA_CHAVU</name>
<keyword id="KW-0066">ATP synthesis</keyword>
<keyword id="KW-0067">ATP-binding</keyword>
<keyword id="KW-0139">CF(1)</keyword>
<keyword id="KW-0150">Chloroplast</keyword>
<keyword id="KW-0375">Hydrogen ion transport</keyword>
<keyword id="KW-0406">Ion transport</keyword>
<keyword id="KW-0472">Membrane</keyword>
<keyword id="KW-0547">Nucleotide-binding</keyword>
<keyword id="KW-0934">Plastid</keyword>
<keyword id="KW-0793">Thylakoid</keyword>
<keyword id="KW-1278">Translocase</keyword>
<keyword id="KW-0813">Transport</keyword>
<comment type="function">
    <text evidence="1">Produces ATP from ADP in the presence of a proton gradient across the membrane. The alpha chain is a regulatory subunit.</text>
</comment>
<comment type="catalytic activity">
    <reaction evidence="1">
        <text>ATP + H2O + 4 H(+)(in) = ADP + phosphate + 5 H(+)(out)</text>
        <dbReference type="Rhea" id="RHEA:57720"/>
        <dbReference type="ChEBI" id="CHEBI:15377"/>
        <dbReference type="ChEBI" id="CHEBI:15378"/>
        <dbReference type="ChEBI" id="CHEBI:30616"/>
        <dbReference type="ChEBI" id="CHEBI:43474"/>
        <dbReference type="ChEBI" id="CHEBI:456216"/>
        <dbReference type="EC" id="7.1.2.2"/>
    </reaction>
</comment>
<comment type="subunit">
    <text evidence="1">F-type ATPases have 2 components, CF(1) - the catalytic core - and CF(0) - the membrane proton channel. CF(1) has five subunits: alpha(3), beta(3), gamma(1), delta(1), epsilon(1). CF(0) has four main subunits: a, b, b' and c.</text>
</comment>
<comment type="subcellular location">
    <subcellularLocation>
        <location evidence="1">Plastid</location>
        <location evidence="1">Chloroplast thylakoid membrane</location>
        <topology evidence="1">Peripheral membrane protein</topology>
    </subcellularLocation>
</comment>
<comment type="similarity">
    <text evidence="1">Belongs to the ATPase alpha/beta chains family.</text>
</comment>
<organism>
    <name type="scientific">Chara vulgaris</name>
    <name type="common">Common stonewort</name>
    <dbReference type="NCBI Taxonomy" id="55564"/>
    <lineage>
        <taxon>Eukaryota</taxon>
        <taxon>Viridiplantae</taxon>
        <taxon>Streptophyta</taxon>
        <taxon>Charophyceae</taxon>
        <taxon>Charales</taxon>
        <taxon>Characeae</taxon>
        <taxon>Chara</taxon>
    </lineage>
</organism>
<proteinExistence type="inferred from homology"/>
<gene>
    <name evidence="1" type="primary">atpA</name>
</gene>
<accession>Q1ACM8</accession>
<protein>
    <recommendedName>
        <fullName evidence="1">ATP synthase subunit alpha, chloroplastic</fullName>
        <ecNumber evidence="1">7.1.2.2</ecNumber>
    </recommendedName>
    <alternativeName>
        <fullName evidence="1">ATP synthase F1 sector subunit alpha</fullName>
    </alternativeName>
    <alternativeName>
        <fullName evidence="1">F-ATPase subunit alpha</fullName>
    </alternativeName>
</protein>
<evidence type="ECO:0000255" key="1">
    <source>
        <dbReference type="HAMAP-Rule" id="MF_01346"/>
    </source>
</evidence>
<geneLocation type="chloroplast"/>
<feature type="chain" id="PRO_0000256120" description="ATP synthase subunit alpha, chloroplastic">
    <location>
        <begin position="1"/>
        <end position="508"/>
    </location>
</feature>
<feature type="binding site" evidence="1">
    <location>
        <begin position="173"/>
        <end position="180"/>
    </location>
    <ligand>
        <name>ATP</name>
        <dbReference type="ChEBI" id="CHEBI:30616"/>
    </ligand>
</feature>
<feature type="site" description="Required for activity" evidence="1">
    <location>
        <position position="366"/>
    </location>
</feature>
<reference key="1">
    <citation type="journal article" date="2006" name="Mol. Biol. Evol.">
        <title>The chloroplast genome sequence of Chara vulgaris sheds new light into the closest green algal relatives of land plants.</title>
        <authorList>
            <person name="Turmel M."/>
            <person name="Otis C."/>
            <person name="Lemieux C."/>
        </authorList>
    </citation>
    <scope>NUCLEOTIDE SEQUENCE [LARGE SCALE GENOMIC DNA]</scope>
</reference>
<sequence length="508" mass="55289">MVSNIGIRPAEISSIIRKKIEEYDQEVKIVNIGTVLQVGDGIARIYGLDQVMAGELLEFEDNTVGIALNLESDNVGAVLMGEGLTIQEGSSVKATGKIAQIPVGDSYLGRVVNALARPIDGKGDIDTSESRLIESPAPGIISRRSVYEPMQTGLIAIDSMIPIGRGQRELIIGDRQTGKTAVAVDTILNQKGQDVICVYVAIGQKASSVAQVVNTFEDRSALSYTIVVAETANSSATLQYLAPYTGASLAEYFMYKGRHTLVVYDDLSKQAQAYRQMSLLLRRPPGREAYPGDVFYLHSRLLERAAKLSSQLGEGSMTALPIVETQAGDVSAYIPTNVISITDGQIFLSADLFNAGIRPAINVGISVSRVGSAAQIKAMKQVAGKLKLELAQFAELEAFAQFASDLDKATQNQLARGQRLRELLKQAQSSPLSVEEQVATIYTGINGYLDKLETQQVRKFLTEFRIYLSSNKLEFIEILKSTKTFTDKAETKLKEALHEFTEEFLTSA</sequence>
<dbReference type="EC" id="7.1.2.2" evidence="1"/>
<dbReference type="EMBL" id="DQ229107">
    <property type="protein sequence ID" value="ABA61930.1"/>
    <property type="molecule type" value="Genomic_DNA"/>
</dbReference>
<dbReference type="RefSeq" id="YP_635719.1">
    <property type="nucleotide sequence ID" value="NC_008097.1"/>
</dbReference>
<dbReference type="SMR" id="Q1ACM8"/>
<dbReference type="GeneID" id="4100217"/>
<dbReference type="GO" id="GO:0009535">
    <property type="term" value="C:chloroplast thylakoid membrane"/>
    <property type="evidence" value="ECO:0007669"/>
    <property type="project" value="UniProtKB-SubCell"/>
</dbReference>
<dbReference type="GO" id="GO:0045259">
    <property type="term" value="C:proton-transporting ATP synthase complex"/>
    <property type="evidence" value="ECO:0007669"/>
    <property type="project" value="UniProtKB-KW"/>
</dbReference>
<dbReference type="GO" id="GO:0043531">
    <property type="term" value="F:ADP binding"/>
    <property type="evidence" value="ECO:0007669"/>
    <property type="project" value="TreeGrafter"/>
</dbReference>
<dbReference type="GO" id="GO:0005524">
    <property type="term" value="F:ATP binding"/>
    <property type="evidence" value="ECO:0007669"/>
    <property type="project" value="UniProtKB-UniRule"/>
</dbReference>
<dbReference type="GO" id="GO:0046933">
    <property type="term" value="F:proton-transporting ATP synthase activity, rotational mechanism"/>
    <property type="evidence" value="ECO:0007669"/>
    <property type="project" value="UniProtKB-UniRule"/>
</dbReference>
<dbReference type="CDD" id="cd18113">
    <property type="entry name" value="ATP-synt_F1_alpha_C"/>
    <property type="match status" value="1"/>
</dbReference>
<dbReference type="CDD" id="cd18116">
    <property type="entry name" value="ATP-synt_F1_alpha_N"/>
    <property type="match status" value="1"/>
</dbReference>
<dbReference type="CDD" id="cd01132">
    <property type="entry name" value="F1-ATPase_alpha_CD"/>
    <property type="match status" value="1"/>
</dbReference>
<dbReference type="FunFam" id="1.20.150.20:FF:000001">
    <property type="entry name" value="ATP synthase subunit alpha"/>
    <property type="match status" value="1"/>
</dbReference>
<dbReference type="FunFam" id="2.40.30.20:FF:000001">
    <property type="entry name" value="ATP synthase subunit alpha"/>
    <property type="match status" value="1"/>
</dbReference>
<dbReference type="FunFam" id="3.40.50.300:FF:000002">
    <property type="entry name" value="ATP synthase subunit alpha"/>
    <property type="match status" value="1"/>
</dbReference>
<dbReference type="Gene3D" id="2.40.30.20">
    <property type="match status" value="1"/>
</dbReference>
<dbReference type="Gene3D" id="1.20.150.20">
    <property type="entry name" value="ATP synthase alpha/beta chain, C-terminal domain"/>
    <property type="match status" value="1"/>
</dbReference>
<dbReference type="Gene3D" id="3.40.50.300">
    <property type="entry name" value="P-loop containing nucleotide triphosphate hydrolases"/>
    <property type="match status" value="1"/>
</dbReference>
<dbReference type="HAMAP" id="MF_01346">
    <property type="entry name" value="ATP_synth_alpha_bact"/>
    <property type="match status" value="1"/>
</dbReference>
<dbReference type="InterPro" id="IPR023366">
    <property type="entry name" value="ATP_synth_asu-like_sf"/>
</dbReference>
<dbReference type="InterPro" id="IPR000793">
    <property type="entry name" value="ATP_synth_asu_C"/>
</dbReference>
<dbReference type="InterPro" id="IPR038376">
    <property type="entry name" value="ATP_synth_asu_C_sf"/>
</dbReference>
<dbReference type="InterPro" id="IPR033732">
    <property type="entry name" value="ATP_synth_F1_a_nt-bd_dom"/>
</dbReference>
<dbReference type="InterPro" id="IPR005294">
    <property type="entry name" value="ATP_synth_F1_asu"/>
</dbReference>
<dbReference type="InterPro" id="IPR020003">
    <property type="entry name" value="ATPase_a/bsu_AS"/>
</dbReference>
<dbReference type="InterPro" id="IPR004100">
    <property type="entry name" value="ATPase_F1/V1/A1_a/bsu_N"/>
</dbReference>
<dbReference type="InterPro" id="IPR036121">
    <property type="entry name" value="ATPase_F1/V1/A1_a/bsu_N_sf"/>
</dbReference>
<dbReference type="InterPro" id="IPR000194">
    <property type="entry name" value="ATPase_F1/V1/A1_a/bsu_nucl-bd"/>
</dbReference>
<dbReference type="InterPro" id="IPR027417">
    <property type="entry name" value="P-loop_NTPase"/>
</dbReference>
<dbReference type="NCBIfam" id="TIGR00962">
    <property type="entry name" value="atpA"/>
    <property type="match status" value="1"/>
</dbReference>
<dbReference type="NCBIfam" id="NF009884">
    <property type="entry name" value="PRK13343.1"/>
    <property type="match status" value="1"/>
</dbReference>
<dbReference type="PANTHER" id="PTHR48082">
    <property type="entry name" value="ATP SYNTHASE SUBUNIT ALPHA, MITOCHONDRIAL"/>
    <property type="match status" value="1"/>
</dbReference>
<dbReference type="PANTHER" id="PTHR48082:SF2">
    <property type="entry name" value="ATP SYNTHASE SUBUNIT ALPHA, MITOCHONDRIAL"/>
    <property type="match status" value="1"/>
</dbReference>
<dbReference type="Pfam" id="PF00006">
    <property type="entry name" value="ATP-synt_ab"/>
    <property type="match status" value="1"/>
</dbReference>
<dbReference type="Pfam" id="PF00306">
    <property type="entry name" value="ATP-synt_ab_C"/>
    <property type="match status" value="1"/>
</dbReference>
<dbReference type="Pfam" id="PF02874">
    <property type="entry name" value="ATP-synt_ab_N"/>
    <property type="match status" value="1"/>
</dbReference>
<dbReference type="PIRSF" id="PIRSF039088">
    <property type="entry name" value="F_ATPase_subunit_alpha"/>
    <property type="match status" value="1"/>
</dbReference>
<dbReference type="SUPFAM" id="SSF47917">
    <property type="entry name" value="C-terminal domain of alpha and beta subunits of F1 ATP synthase"/>
    <property type="match status" value="1"/>
</dbReference>
<dbReference type="SUPFAM" id="SSF50615">
    <property type="entry name" value="N-terminal domain of alpha and beta subunits of F1 ATP synthase"/>
    <property type="match status" value="1"/>
</dbReference>
<dbReference type="SUPFAM" id="SSF52540">
    <property type="entry name" value="P-loop containing nucleoside triphosphate hydrolases"/>
    <property type="match status" value="1"/>
</dbReference>
<dbReference type="PROSITE" id="PS00152">
    <property type="entry name" value="ATPASE_ALPHA_BETA"/>
    <property type="match status" value="1"/>
</dbReference>